<reference key="1">
    <citation type="submission" date="2007-05" db="EMBL/GenBank/DDBJ databases">
        <title>Complete sequence of Thermotoga petrophila RKU-1.</title>
        <authorList>
            <consortium name="US DOE Joint Genome Institute"/>
            <person name="Copeland A."/>
            <person name="Lucas S."/>
            <person name="Lapidus A."/>
            <person name="Barry K."/>
            <person name="Glavina del Rio T."/>
            <person name="Dalin E."/>
            <person name="Tice H."/>
            <person name="Pitluck S."/>
            <person name="Sims D."/>
            <person name="Brettin T."/>
            <person name="Bruce D."/>
            <person name="Detter J.C."/>
            <person name="Han C."/>
            <person name="Tapia R."/>
            <person name="Schmutz J."/>
            <person name="Larimer F."/>
            <person name="Land M."/>
            <person name="Hauser L."/>
            <person name="Kyrpides N."/>
            <person name="Mikhailova N."/>
            <person name="Nelson K."/>
            <person name="Gogarten J.P."/>
            <person name="Noll K."/>
            <person name="Richardson P."/>
        </authorList>
    </citation>
    <scope>NUCLEOTIDE SEQUENCE [LARGE SCALE GENOMIC DNA]</scope>
    <source>
        <strain>ATCC BAA-488 / DSM 13995 / JCM 10881 / RKU-1</strain>
    </source>
</reference>
<protein>
    <recommendedName>
        <fullName evidence="1">Small ribosomal subunit protein uS15</fullName>
    </recommendedName>
    <alternativeName>
        <fullName evidence="2">30S ribosomal protein S15</fullName>
    </alternativeName>
</protein>
<gene>
    <name evidence="1" type="primary">rpsO</name>
    <name type="ordered locus">Tpet_1439</name>
</gene>
<name>RS15_THEP1</name>
<sequence>MVSLDPEKKNEIIKEFQIHENDTGSVEVQIALLTARIKHLTEHLRKHPKDFHSRRGLMKMIGRRRKMLKYLRHKKPEVYRELIAKLGIRK</sequence>
<dbReference type="EMBL" id="CP000702">
    <property type="protein sequence ID" value="ABQ47452.1"/>
    <property type="molecule type" value="Genomic_DNA"/>
</dbReference>
<dbReference type="SMR" id="A5IMM9"/>
<dbReference type="STRING" id="390874.Tpet_1439"/>
<dbReference type="KEGG" id="tpt:Tpet_1439"/>
<dbReference type="eggNOG" id="COG0184">
    <property type="taxonomic scope" value="Bacteria"/>
</dbReference>
<dbReference type="HOGENOM" id="CLU_148518_0_0_0"/>
<dbReference type="Proteomes" id="UP000006558">
    <property type="component" value="Chromosome"/>
</dbReference>
<dbReference type="GO" id="GO:0022627">
    <property type="term" value="C:cytosolic small ribosomal subunit"/>
    <property type="evidence" value="ECO:0007669"/>
    <property type="project" value="TreeGrafter"/>
</dbReference>
<dbReference type="GO" id="GO:0019843">
    <property type="term" value="F:rRNA binding"/>
    <property type="evidence" value="ECO:0007669"/>
    <property type="project" value="UniProtKB-UniRule"/>
</dbReference>
<dbReference type="GO" id="GO:0003735">
    <property type="term" value="F:structural constituent of ribosome"/>
    <property type="evidence" value="ECO:0007669"/>
    <property type="project" value="InterPro"/>
</dbReference>
<dbReference type="GO" id="GO:0006412">
    <property type="term" value="P:translation"/>
    <property type="evidence" value="ECO:0007669"/>
    <property type="project" value="UniProtKB-UniRule"/>
</dbReference>
<dbReference type="CDD" id="cd00353">
    <property type="entry name" value="Ribosomal_S15p_S13e"/>
    <property type="match status" value="1"/>
</dbReference>
<dbReference type="FunFam" id="1.10.287.10:FF:000002">
    <property type="entry name" value="30S ribosomal protein S15"/>
    <property type="match status" value="1"/>
</dbReference>
<dbReference type="Gene3D" id="6.10.250.3130">
    <property type="match status" value="1"/>
</dbReference>
<dbReference type="Gene3D" id="1.10.287.10">
    <property type="entry name" value="S15/NS1, RNA-binding"/>
    <property type="match status" value="1"/>
</dbReference>
<dbReference type="HAMAP" id="MF_01343_B">
    <property type="entry name" value="Ribosomal_uS15_B"/>
    <property type="match status" value="1"/>
</dbReference>
<dbReference type="InterPro" id="IPR000589">
    <property type="entry name" value="Ribosomal_uS15"/>
</dbReference>
<dbReference type="InterPro" id="IPR005290">
    <property type="entry name" value="Ribosomal_uS15_bac-type"/>
</dbReference>
<dbReference type="InterPro" id="IPR009068">
    <property type="entry name" value="uS15_NS1_RNA-bd_sf"/>
</dbReference>
<dbReference type="NCBIfam" id="TIGR00952">
    <property type="entry name" value="S15_bact"/>
    <property type="match status" value="1"/>
</dbReference>
<dbReference type="PANTHER" id="PTHR23321">
    <property type="entry name" value="RIBOSOMAL PROTEIN S15, BACTERIAL AND ORGANELLAR"/>
    <property type="match status" value="1"/>
</dbReference>
<dbReference type="PANTHER" id="PTHR23321:SF26">
    <property type="entry name" value="SMALL RIBOSOMAL SUBUNIT PROTEIN US15M"/>
    <property type="match status" value="1"/>
</dbReference>
<dbReference type="Pfam" id="PF00312">
    <property type="entry name" value="Ribosomal_S15"/>
    <property type="match status" value="1"/>
</dbReference>
<dbReference type="SMART" id="SM01387">
    <property type="entry name" value="Ribosomal_S15"/>
    <property type="match status" value="1"/>
</dbReference>
<dbReference type="SUPFAM" id="SSF47060">
    <property type="entry name" value="S15/NS1 RNA-binding domain"/>
    <property type="match status" value="1"/>
</dbReference>
<dbReference type="PROSITE" id="PS00362">
    <property type="entry name" value="RIBOSOMAL_S15"/>
    <property type="match status" value="1"/>
</dbReference>
<comment type="function">
    <text evidence="1">One of the primary rRNA binding proteins, it binds directly to 16S rRNA where it helps nucleate assembly of the platform of the 30S subunit by binding and bridging several RNA helices of the 16S rRNA.</text>
</comment>
<comment type="function">
    <text evidence="1">Forms an intersubunit bridge (bridge B4) with the 23S rRNA of the 50S subunit in the ribosome.</text>
</comment>
<comment type="subunit">
    <text evidence="1">Part of the 30S ribosomal subunit. Forms a bridge to the 50S subunit in the 70S ribosome, contacting the 23S rRNA.</text>
</comment>
<comment type="similarity">
    <text evidence="1">Belongs to the universal ribosomal protein uS15 family.</text>
</comment>
<proteinExistence type="inferred from homology"/>
<feature type="chain" id="PRO_1000054890" description="Small ribosomal subunit protein uS15">
    <location>
        <begin position="1"/>
        <end position="90"/>
    </location>
</feature>
<organism>
    <name type="scientific">Thermotoga petrophila (strain ATCC BAA-488 / DSM 13995 / JCM 10881 / RKU-1)</name>
    <dbReference type="NCBI Taxonomy" id="390874"/>
    <lineage>
        <taxon>Bacteria</taxon>
        <taxon>Thermotogati</taxon>
        <taxon>Thermotogota</taxon>
        <taxon>Thermotogae</taxon>
        <taxon>Thermotogales</taxon>
        <taxon>Thermotogaceae</taxon>
        <taxon>Thermotoga</taxon>
    </lineage>
</organism>
<evidence type="ECO:0000255" key="1">
    <source>
        <dbReference type="HAMAP-Rule" id="MF_01343"/>
    </source>
</evidence>
<evidence type="ECO:0000305" key="2"/>
<accession>A5IMM9</accession>
<keyword id="KW-0687">Ribonucleoprotein</keyword>
<keyword id="KW-0689">Ribosomal protein</keyword>
<keyword id="KW-0694">RNA-binding</keyword>
<keyword id="KW-0699">rRNA-binding</keyword>